<feature type="signal peptide" evidence="2">
    <location>
        <begin position="1"/>
        <end position="26"/>
    </location>
</feature>
<feature type="chain" id="PRO_0000410797" description="Protein delta homolog 2">
    <location>
        <begin position="27"/>
        <end position="382"/>
    </location>
</feature>
<feature type="topological domain" description="Extracellular" evidence="2">
    <location>
        <begin position="27"/>
        <end position="305"/>
    </location>
</feature>
<feature type="transmembrane region" description="Helical" evidence="2">
    <location>
        <begin position="306"/>
        <end position="326"/>
    </location>
</feature>
<feature type="topological domain" description="Cytoplasmic" evidence="2">
    <location>
        <begin position="327"/>
        <end position="382"/>
    </location>
</feature>
<feature type="domain" description="EGF-like 1" evidence="3">
    <location>
        <begin position="27"/>
        <end position="58"/>
    </location>
</feature>
<feature type="domain" description="EGF-like 2" evidence="3">
    <location>
        <begin position="62"/>
        <end position="89"/>
    </location>
</feature>
<feature type="domain" description="EGF-like 3" evidence="3">
    <location>
        <begin position="91"/>
        <end position="129"/>
    </location>
</feature>
<feature type="domain" description="EGF-like 4" evidence="3">
    <location>
        <begin position="131"/>
        <end position="172"/>
    </location>
</feature>
<feature type="domain" description="EGF-like 5; calcium-binding" evidence="3">
    <location>
        <begin position="174"/>
        <end position="210"/>
    </location>
</feature>
<feature type="domain" description="EGF-like 6; calcium-binding" evidence="3">
    <location>
        <begin position="212"/>
        <end position="248"/>
    </location>
</feature>
<feature type="glycosylation site" description="N-linked (GlcNAc...) asparagine" evidence="2">
    <location>
        <position position="157"/>
    </location>
</feature>
<feature type="disulfide bond" evidence="3">
    <location>
        <begin position="29"/>
        <end position="40"/>
    </location>
</feature>
<feature type="disulfide bond" evidence="3">
    <location>
        <begin position="33"/>
        <end position="46"/>
    </location>
</feature>
<feature type="disulfide bond" evidence="3">
    <location>
        <begin position="48"/>
        <end position="57"/>
    </location>
</feature>
<feature type="disulfide bond" evidence="3">
    <location>
        <begin position="66"/>
        <end position="71"/>
    </location>
</feature>
<feature type="disulfide bond" evidence="3">
    <location>
        <begin position="79"/>
        <end position="88"/>
    </location>
</feature>
<feature type="disulfide bond" evidence="3">
    <location>
        <begin position="95"/>
        <end position="107"/>
    </location>
</feature>
<feature type="disulfide bond" evidence="3">
    <location>
        <begin position="101"/>
        <end position="117"/>
    </location>
</feature>
<feature type="disulfide bond" evidence="3">
    <location>
        <begin position="119"/>
        <end position="128"/>
    </location>
</feature>
<feature type="disulfide bond" evidence="3">
    <location>
        <begin position="135"/>
        <end position="148"/>
    </location>
</feature>
<feature type="disulfide bond" evidence="3">
    <location>
        <begin position="142"/>
        <end position="160"/>
    </location>
</feature>
<feature type="disulfide bond" evidence="3">
    <location>
        <begin position="162"/>
        <end position="171"/>
    </location>
</feature>
<feature type="disulfide bond" evidence="3">
    <location>
        <begin position="178"/>
        <end position="189"/>
    </location>
</feature>
<feature type="disulfide bond" evidence="3">
    <location>
        <begin position="183"/>
        <end position="198"/>
    </location>
</feature>
<feature type="disulfide bond" evidence="3">
    <location>
        <begin position="200"/>
        <end position="209"/>
    </location>
</feature>
<feature type="disulfide bond" evidence="3">
    <location>
        <begin position="216"/>
        <end position="227"/>
    </location>
</feature>
<feature type="disulfide bond" evidence="3">
    <location>
        <begin position="221"/>
        <end position="236"/>
    </location>
</feature>
<feature type="disulfide bond" evidence="3">
    <location>
        <begin position="238"/>
        <end position="247"/>
    </location>
</feature>
<reference key="1">
    <citation type="submission" date="2005-09" db="EMBL/GenBank/DDBJ databases">
        <authorList>
            <person name="Mural R.J."/>
            <person name="Adams M.D."/>
            <person name="Myers E.W."/>
            <person name="Smith H.O."/>
            <person name="Venter J.C."/>
        </authorList>
    </citation>
    <scope>NUCLEOTIDE SEQUENCE [LARGE SCALE GENOMIC DNA]</scope>
</reference>
<keyword id="KW-0106">Calcium</keyword>
<keyword id="KW-1015">Disulfide bond</keyword>
<keyword id="KW-0245">EGF-like domain</keyword>
<keyword id="KW-0325">Glycoprotein</keyword>
<keyword id="KW-0472">Membrane</keyword>
<keyword id="KW-1185">Reference proteome</keyword>
<keyword id="KW-0677">Repeat</keyword>
<keyword id="KW-0732">Signal</keyword>
<keyword id="KW-0812">Transmembrane</keyword>
<keyword id="KW-1133">Transmembrane helix</keyword>
<comment type="function">
    <text evidence="1">Regulates adipogenesis.</text>
</comment>
<comment type="subcellular location">
    <subcellularLocation>
        <location evidence="4">Membrane</location>
        <topology evidence="4">Single-pass type I membrane protein</topology>
    </subcellularLocation>
</comment>
<gene>
    <name type="primary">Dlk2</name>
    <name type="synonym">Egfl9</name>
</gene>
<evidence type="ECO:0000250" key="1"/>
<evidence type="ECO:0000255" key="2"/>
<evidence type="ECO:0000255" key="3">
    <source>
        <dbReference type="PROSITE-ProRule" id="PRU00076"/>
    </source>
</evidence>
<evidence type="ECO:0000305" key="4"/>
<accession>D3ZUK3</accession>
<sequence>MPSGCRCLNLVCLLCILGATSQPARADDCSSHCDLAHGCCAPDGSCRCDPGWEGLHCERCVRMPGCQHGTCHQPWQCICHSGWAGKFCDKDEHICTSQSPCQNGGQCVYDGGGEYHCVCLPGFRGRGCERKAGPCEQAGFPCQNGGQCQDNQGFALNFTCRCLAGFMGAHCEVNVDDCLMRPCANGATCIDGINRFSCLCPEGFAGRFCTINLDDCASRPCQRGARCRDRVHDFDCLCPSGYGGKTCELVLPAPDPATIGTPQAPASAVVVPATGSAPHSAGAGLLRISVKEVVRRQEAGLGESSLVALVVFGSLTAALVLATVLLTLRAWRRGICPTGPCCDPAPHYAPARQDQECQVSMLPAGFPLSPDLPPEPGKTTAL</sequence>
<dbReference type="EMBL" id="CH473987">
    <property type="protein sequence ID" value="EDM18816.1"/>
    <property type="molecule type" value="Genomic_DNA"/>
</dbReference>
<dbReference type="RefSeq" id="NP_001101672.1">
    <property type="nucleotide sequence ID" value="NM_001108202.2"/>
</dbReference>
<dbReference type="RefSeq" id="XP_006244585.1">
    <property type="nucleotide sequence ID" value="XM_006244523.3"/>
</dbReference>
<dbReference type="SMR" id="D3ZUK3"/>
<dbReference type="FunCoup" id="D3ZUK3">
    <property type="interactions" value="567"/>
</dbReference>
<dbReference type="STRING" id="10116.ENSRNOP00000025638"/>
<dbReference type="GlyCosmos" id="D3ZUK3">
    <property type="glycosylation" value="1 site, No reported glycans"/>
</dbReference>
<dbReference type="GlyGen" id="D3ZUK3">
    <property type="glycosylation" value="2 sites"/>
</dbReference>
<dbReference type="PhosphoSitePlus" id="D3ZUK3"/>
<dbReference type="PaxDb" id="10116-ENSRNOP00000025638"/>
<dbReference type="Ensembl" id="ENSRNOT00000025638.5">
    <property type="protein sequence ID" value="ENSRNOP00000025638.3"/>
    <property type="gene ID" value="ENSRNOG00000018949.7"/>
</dbReference>
<dbReference type="GeneID" id="316232"/>
<dbReference type="KEGG" id="rno:316232"/>
<dbReference type="UCSC" id="RGD:1309143">
    <property type="organism name" value="rat"/>
</dbReference>
<dbReference type="AGR" id="RGD:1309143"/>
<dbReference type="CTD" id="65989"/>
<dbReference type="RGD" id="1309143">
    <property type="gene designation" value="Dlk2"/>
</dbReference>
<dbReference type="eggNOG" id="KOG1217">
    <property type="taxonomic scope" value="Eukaryota"/>
</dbReference>
<dbReference type="GeneTree" id="ENSGT00940000160761"/>
<dbReference type="HOGENOM" id="CLU_039179_1_0_1"/>
<dbReference type="InParanoid" id="D3ZUK3"/>
<dbReference type="OMA" id="SVPEPTW"/>
<dbReference type="OrthoDB" id="12356at9989"/>
<dbReference type="PhylomeDB" id="D3ZUK3"/>
<dbReference type="PRO" id="PR:D3ZUK3"/>
<dbReference type="Proteomes" id="UP000002494">
    <property type="component" value="Chromosome 9"/>
</dbReference>
<dbReference type="Proteomes" id="UP000234681">
    <property type="component" value="Chromosome 9"/>
</dbReference>
<dbReference type="Bgee" id="ENSRNOG00000018949">
    <property type="expression patterns" value="Expressed in frontal cortex and 3 other cell types or tissues"/>
</dbReference>
<dbReference type="GO" id="GO:0016020">
    <property type="term" value="C:membrane"/>
    <property type="evidence" value="ECO:0007669"/>
    <property type="project" value="UniProtKB-SubCell"/>
</dbReference>
<dbReference type="GO" id="GO:0005509">
    <property type="term" value="F:calcium ion binding"/>
    <property type="evidence" value="ECO:0007669"/>
    <property type="project" value="InterPro"/>
</dbReference>
<dbReference type="GO" id="GO:0042802">
    <property type="term" value="F:identical protein binding"/>
    <property type="evidence" value="ECO:0000266"/>
    <property type="project" value="RGD"/>
</dbReference>
<dbReference type="GO" id="GO:0005112">
    <property type="term" value="F:Notch binding"/>
    <property type="evidence" value="ECO:0000318"/>
    <property type="project" value="GO_Central"/>
</dbReference>
<dbReference type="GO" id="GO:0045746">
    <property type="term" value="P:negative regulation of Notch signaling pathway"/>
    <property type="evidence" value="ECO:0000266"/>
    <property type="project" value="RGD"/>
</dbReference>
<dbReference type="GO" id="GO:0045598">
    <property type="term" value="P:regulation of fat cell differentiation"/>
    <property type="evidence" value="ECO:0000266"/>
    <property type="project" value="RGD"/>
</dbReference>
<dbReference type="CDD" id="cd00054">
    <property type="entry name" value="EGF_CA"/>
    <property type="match status" value="4"/>
</dbReference>
<dbReference type="FunFam" id="2.10.25.10:FF:000018">
    <property type="entry name" value="Delta-like 1"/>
    <property type="match status" value="1"/>
</dbReference>
<dbReference type="FunFam" id="2.10.25.10:FF:000263">
    <property type="entry name" value="Protein delta homolog 2"/>
    <property type="match status" value="1"/>
</dbReference>
<dbReference type="FunFam" id="2.10.25.10:FF:000118">
    <property type="entry name" value="protein delta homolog 2"/>
    <property type="match status" value="2"/>
</dbReference>
<dbReference type="FunFam" id="2.10.25.10:FF:000334">
    <property type="entry name" value="protein delta homolog 2 isoform X1"/>
    <property type="match status" value="1"/>
</dbReference>
<dbReference type="Gene3D" id="2.10.25.10">
    <property type="entry name" value="Laminin"/>
    <property type="match status" value="5"/>
</dbReference>
<dbReference type="InterPro" id="IPR001881">
    <property type="entry name" value="EGF-like_Ca-bd_dom"/>
</dbReference>
<dbReference type="InterPro" id="IPR013032">
    <property type="entry name" value="EGF-like_CS"/>
</dbReference>
<dbReference type="InterPro" id="IPR000742">
    <property type="entry name" value="EGF-like_dom"/>
</dbReference>
<dbReference type="InterPro" id="IPR000152">
    <property type="entry name" value="EGF-type_Asp/Asn_hydroxyl_site"/>
</dbReference>
<dbReference type="InterPro" id="IPR018097">
    <property type="entry name" value="EGF_Ca-bd_CS"/>
</dbReference>
<dbReference type="InterPro" id="IPR051022">
    <property type="entry name" value="Notch_Cell-Fate_Det"/>
</dbReference>
<dbReference type="PANTHER" id="PTHR24049">
    <property type="entry name" value="CRUMBS FAMILY MEMBER"/>
    <property type="match status" value="1"/>
</dbReference>
<dbReference type="PANTHER" id="PTHR24049:SF38">
    <property type="entry name" value="DELTA-LIKE PROTEIN"/>
    <property type="match status" value="1"/>
</dbReference>
<dbReference type="Pfam" id="PF00008">
    <property type="entry name" value="EGF"/>
    <property type="match status" value="3"/>
</dbReference>
<dbReference type="Pfam" id="PF21700">
    <property type="entry name" value="EGF_DL_JAG"/>
    <property type="match status" value="1"/>
</dbReference>
<dbReference type="Pfam" id="PF12661">
    <property type="entry name" value="hEGF"/>
    <property type="match status" value="1"/>
</dbReference>
<dbReference type="PRINTS" id="PR00010">
    <property type="entry name" value="EGFBLOOD"/>
</dbReference>
<dbReference type="SMART" id="SM00181">
    <property type="entry name" value="EGF"/>
    <property type="match status" value="6"/>
</dbReference>
<dbReference type="SMART" id="SM00179">
    <property type="entry name" value="EGF_CA"/>
    <property type="match status" value="4"/>
</dbReference>
<dbReference type="SUPFAM" id="SSF57196">
    <property type="entry name" value="EGF/Laminin"/>
    <property type="match status" value="4"/>
</dbReference>
<dbReference type="PROSITE" id="PS00010">
    <property type="entry name" value="ASX_HYDROXYL"/>
    <property type="match status" value="2"/>
</dbReference>
<dbReference type="PROSITE" id="PS00022">
    <property type="entry name" value="EGF_1"/>
    <property type="match status" value="6"/>
</dbReference>
<dbReference type="PROSITE" id="PS01186">
    <property type="entry name" value="EGF_2"/>
    <property type="match status" value="6"/>
</dbReference>
<dbReference type="PROSITE" id="PS50026">
    <property type="entry name" value="EGF_3"/>
    <property type="match status" value="6"/>
</dbReference>
<dbReference type="PROSITE" id="PS01187">
    <property type="entry name" value="EGF_CA"/>
    <property type="match status" value="2"/>
</dbReference>
<protein>
    <recommendedName>
        <fullName>Protein delta homolog 2</fullName>
        <shortName>DLK-2</shortName>
    </recommendedName>
    <alternativeName>
        <fullName>Endothelial cell-specific protein S-1</fullName>
    </alternativeName>
    <alternativeName>
        <fullName>Epidermal growth factor-like protein 9</fullName>
        <shortName>EGF-like protein 9</shortName>
    </alternativeName>
</protein>
<name>DLK2_RAT</name>
<organism>
    <name type="scientific">Rattus norvegicus</name>
    <name type="common">Rat</name>
    <dbReference type="NCBI Taxonomy" id="10116"/>
    <lineage>
        <taxon>Eukaryota</taxon>
        <taxon>Metazoa</taxon>
        <taxon>Chordata</taxon>
        <taxon>Craniata</taxon>
        <taxon>Vertebrata</taxon>
        <taxon>Euteleostomi</taxon>
        <taxon>Mammalia</taxon>
        <taxon>Eutheria</taxon>
        <taxon>Euarchontoglires</taxon>
        <taxon>Glires</taxon>
        <taxon>Rodentia</taxon>
        <taxon>Myomorpha</taxon>
        <taxon>Muroidea</taxon>
        <taxon>Muridae</taxon>
        <taxon>Murinae</taxon>
        <taxon>Rattus</taxon>
    </lineage>
</organism>
<proteinExistence type="inferred from homology"/>